<dbReference type="SMR" id="C0HL15"/>
<dbReference type="GO" id="GO:0006952">
    <property type="term" value="P:defense response"/>
    <property type="evidence" value="ECO:0007669"/>
    <property type="project" value="UniProtKB-KW"/>
</dbReference>
<dbReference type="InterPro" id="IPR005535">
    <property type="entry name" value="Cyclotide"/>
</dbReference>
<dbReference type="InterPro" id="IPR036146">
    <property type="entry name" value="Cyclotide_sf"/>
</dbReference>
<dbReference type="Pfam" id="PF03784">
    <property type="entry name" value="Cyclotide"/>
    <property type="match status" value="1"/>
</dbReference>
<dbReference type="SUPFAM" id="SSF57038">
    <property type="entry name" value="Cyclotides"/>
    <property type="match status" value="1"/>
</dbReference>
<accession>C0HL15</accession>
<evidence type="ECO:0000255" key="1">
    <source>
        <dbReference type="PROSITE-ProRule" id="PRU00395"/>
    </source>
</evidence>
<evidence type="ECO:0000269" key="2">
    <source>
    </source>
</evidence>
<evidence type="ECO:0000303" key="3">
    <source>
    </source>
</evidence>
<evidence type="ECO:0000305" key="4"/>
<evidence type="ECO:0000305" key="5">
    <source>
    </source>
</evidence>
<protein>
    <recommendedName>
        <fullName evidence="3">Cyclotide vodo I2</fullName>
    </recommendedName>
</protein>
<sequence length="28" mass="2882">GVFCGELCIKASCSIPGCECIAGLCYKN</sequence>
<comment type="function">
    <text evidence="1">Probably participates in a plant defense mechanism.</text>
</comment>
<comment type="domain">
    <text evidence="4">The presence of a 'disulfide through disulfide knot' structurally defines this protein as a knottin.</text>
</comment>
<comment type="PTM">
    <text evidence="1 2">This is a cyclic peptide.</text>
</comment>
<comment type="PTM">
    <text evidence="2">Contains 3 disulfide bonds.</text>
</comment>
<comment type="mass spectrometry" mass="2856.22" method="Electrospray" evidence="2"/>
<comment type="similarity">
    <text evidence="5">Belongs to the cyclotide family. Bracelet subfamily.</text>
</comment>
<comment type="caution">
    <text evidence="1">This peptide is cyclic. The start position was chosen by similarity to Oak1 (kalata B1) for which the DNA sequence is known.</text>
</comment>
<name>CYV2_VIOOD</name>
<keyword id="KW-0903">Direct protein sequencing</keyword>
<keyword id="KW-1015">Disulfide bond</keyword>
<keyword id="KW-0960">Knottin</keyword>
<keyword id="KW-0611">Plant defense</keyword>
<reference evidence="4" key="1">
    <citation type="journal article" date="2017" name="J. Nat. Prod.">
        <title>Cyclotides from the Indian Medicinal Plant Viola odorata (Banafsha): Identification and Characterization.</title>
        <authorList>
            <person name="Narayani M."/>
            <person name="Chadha A."/>
            <person name="Srivastava S."/>
        </authorList>
    </citation>
    <scope>PROTEIN SEQUENCE</scope>
    <scope>MASS SPECTROMETRY</scope>
    <scope>IDENTIFICATION BY MASS SPECTROMETRY</scope>
    <scope>PRESENCE OF DISULFIDE BONDS</scope>
    <scope>CYCLIZATION</scope>
</reference>
<organism evidence="3">
    <name type="scientific">Viola odorata</name>
    <name type="common">Sweet violet</name>
    <dbReference type="NCBI Taxonomy" id="97441"/>
    <lineage>
        <taxon>Eukaryota</taxon>
        <taxon>Viridiplantae</taxon>
        <taxon>Streptophyta</taxon>
        <taxon>Embryophyta</taxon>
        <taxon>Tracheophyta</taxon>
        <taxon>Spermatophyta</taxon>
        <taxon>Magnoliopsida</taxon>
        <taxon>eudicotyledons</taxon>
        <taxon>Gunneridae</taxon>
        <taxon>Pentapetalae</taxon>
        <taxon>rosids</taxon>
        <taxon>fabids</taxon>
        <taxon>Malpighiales</taxon>
        <taxon>Violaceae</taxon>
        <taxon>Viola</taxon>
        <taxon>Viola subgen. Viola</taxon>
        <taxon>Viola sect. Viola</taxon>
        <taxon>Viola subsect. Viola</taxon>
    </lineage>
</organism>
<proteinExistence type="evidence at protein level"/>
<feature type="peptide" id="PRO_0000441790" description="Cyclotide vodo I2" evidence="2">
    <location>
        <begin position="1"/>
        <end position="28"/>
    </location>
</feature>
<feature type="disulfide bond" evidence="1">
    <location>
        <begin position="4"/>
        <end position="18"/>
    </location>
</feature>
<feature type="disulfide bond" evidence="1">
    <location>
        <begin position="8"/>
        <end position="20"/>
    </location>
</feature>
<feature type="disulfide bond" evidence="1">
    <location>
        <begin position="13"/>
        <end position="25"/>
    </location>
</feature>